<feature type="chain" id="PRO_0000269186" description="Tumor protein p63-regulated gene 1-like protein">
    <location>
        <begin position="1"/>
        <end position="272"/>
    </location>
</feature>
<feature type="domain" description="hSac2" evidence="3">
    <location>
        <begin position="65"/>
        <end position="238"/>
    </location>
</feature>
<feature type="region of interest" description="Important for homomultimer formation and localization to presynaptic regions" evidence="1">
    <location>
        <begin position="58"/>
        <end position="97"/>
    </location>
</feature>
<feature type="region of interest" description="Important for homomultimer formation" evidence="1">
    <location>
        <begin position="186"/>
        <end position="272"/>
    </location>
</feature>
<feature type="modified residue" description="Phosphoserine" evidence="2">
    <location>
        <position position="10"/>
    </location>
</feature>
<feature type="modified residue" description="Phosphoserine" evidence="1">
    <location>
        <position position="14"/>
    </location>
</feature>
<feature type="modified residue" description="Phosphothreonine" evidence="7">
    <location>
        <position position="40"/>
    </location>
</feature>
<feature type="splice variant" id="VSP_022019" description="In isoform 2." evidence="4">
    <location>
        <begin position="99"/>
        <end position="157"/>
    </location>
</feature>
<accession>Q5T0D9</accession>
<accession>A8K1K4</accession>
<accession>Q8WV04</accession>
<proteinExistence type="evidence at protein level"/>
<organism>
    <name type="scientific">Homo sapiens</name>
    <name type="common">Human</name>
    <dbReference type="NCBI Taxonomy" id="9606"/>
    <lineage>
        <taxon>Eukaryota</taxon>
        <taxon>Metazoa</taxon>
        <taxon>Chordata</taxon>
        <taxon>Craniata</taxon>
        <taxon>Vertebrata</taxon>
        <taxon>Euteleostomi</taxon>
        <taxon>Mammalia</taxon>
        <taxon>Eutheria</taxon>
        <taxon>Euarchontoglires</taxon>
        <taxon>Primates</taxon>
        <taxon>Haplorrhini</taxon>
        <taxon>Catarrhini</taxon>
        <taxon>Hominidae</taxon>
        <taxon>Homo</taxon>
    </lineage>
</organism>
<sequence length="272" mass="30212">MLQLRDSVDSAGTSPTAVLAAGEEVGAGGGPGGGRPGAGTPLRQTLWPLSIHDPTRRARVKEYFVFRPGSIEQAVEEIRVVVRPVEDGEIQGVWLLTEVDHWNNEKERLVLVTEQSLLICKYDFISLQCQQVVRIALNAVDTISYGEFQFPPKSLNKREGFGIRIQWDKQSRPSFINRWNPWSTNVPYATFTEHPMAGADEKTASLCQLESFKALLIQAVKKAQKESPLPGQANGVLILERPLLIETYVGLMSFINNEAKLGYSMTRGKIGF</sequence>
<keyword id="KW-0025">Alternative splicing</keyword>
<keyword id="KW-0966">Cell projection</keyword>
<keyword id="KW-0968">Cytoplasmic vesicle</keyword>
<keyword id="KW-0472">Membrane</keyword>
<keyword id="KW-0597">Phosphoprotein</keyword>
<keyword id="KW-1267">Proteomics identification</keyword>
<keyword id="KW-1185">Reference proteome</keyword>
<keyword id="KW-0770">Synapse</keyword>
<evidence type="ECO:0000250" key="1">
    <source>
        <dbReference type="UniProtKB" id="A8WCF8"/>
    </source>
</evidence>
<evidence type="ECO:0000250" key="2">
    <source>
        <dbReference type="UniProtKB" id="Q9DBS2"/>
    </source>
</evidence>
<evidence type="ECO:0000255" key="3">
    <source>
        <dbReference type="PROSITE-ProRule" id="PRU01127"/>
    </source>
</evidence>
<evidence type="ECO:0000303" key="4">
    <source>
    </source>
</evidence>
<evidence type="ECO:0000305" key="5"/>
<evidence type="ECO:0000312" key="6">
    <source>
        <dbReference type="HGNC" id="HGNC:27007"/>
    </source>
</evidence>
<evidence type="ECO:0007744" key="7">
    <source>
    </source>
</evidence>
<protein>
    <recommendedName>
        <fullName evidence="5">Tumor protein p63-regulated gene 1-like protein</fullName>
    </recommendedName>
    <alternativeName>
        <fullName>Mossy fiber terminal-associated vertebrate-specific presynaptic protein</fullName>
    </alternativeName>
    <alternativeName>
        <fullName>Protein FAM79A</fullName>
    </alternativeName>
</protein>
<comment type="function">
    <text evidence="1">Presynaptic protein involved in the synaptic transmission tuning. Regulates synaptic release probability by decreasing the calcium sensitivity of release.</text>
</comment>
<comment type="subunit">
    <text evidence="1 2">Forms homomultimers. Multimerization appears to be important for presynaptic targeting. Interacts with BSN.</text>
</comment>
<comment type="subcellular location">
    <subcellularLocation>
        <location evidence="1">Cytoplasmic vesicle</location>
        <location evidence="1">Secretory vesicle</location>
        <location evidence="1">Synaptic vesicle membrane</location>
        <topology evidence="1">Peripheral membrane protein</topology>
    </subcellularLocation>
    <subcellularLocation>
        <location evidence="1">Presynaptic active zone</location>
    </subcellularLocation>
</comment>
<comment type="alternative products">
    <event type="alternative splicing"/>
    <isoform>
        <id>Q5T0D9-1</id>
        <name>1</name>
        <sequence type="displayed"/>
    </isoform>
    <isoform>
        <id>Q5T0D9-2</id>
        <name>2</name>
        <sequence type="described" ref="VSP_022019"/>
    </isoform>
</comment>
<comment type="PTM">
    <text evidence="1">Phosphorylated. Phosphorylation promotes association with synaptic vesicle membranes.</text>
</comment>
<comment type="similarity">
    <text evidence="5">Belongs to the TPRG1 family.</text>
</comment>
<gene>
    <name evidence="6" type="primary">TPRG1L</name>
    <name type="synonym">FAM79A</name>
    <name type="synonym">MOVER</name>
</gene>
<name>TPRGL_HUMAN</name>
<dbReference type="EMBL" id="AK289919">
    <property type="protein sequence ID" value="BAF82608.1"/>
    <property type="molecule type" value="mRNA"/>
</dbReference>
<dbReference type="EMBL" id="AL513320">
    <property type="status" value="NOT_ANNOTATED_CDS"/>
    <property type="molecule type" value="Genomic_DNA"/>
</dbReference>
<dbReference type="EMBL" id="BC019034">
    <property type="protein sequence ID" value="AAH19034.1"/>
    <property type="molecule type" value="mRNA"/>
</dbReference>
<dbReference type="CCDS" id="CCDS47.1">
    <molecule id="Q5T0D9-1"/>
</dbReference>
<dbReference type="RefSeq" id="NP_877429.2">
    <molecule id="Q5T0D9-1"/>
    <property type="nucleotide sequence ID" value="NM_182752.3"/>
</dbReference>
<dbReference type="BioGRID" id="126048">
    <property type="interactions" value="30"/>
</dbReference>
<dbReference type="FunCoup" id="Q5T0D9">
    <property type="interactions" value="273"/>
</dbReference>
<dbReference type="IntAct" id="Q5T0D9">
    <property type="interactions" value="3"/>
</dbReference>
<dbReference type="STRING" id="9606.ENSP00000367595"/>
<dbReference type="iPTMnet" id="Q5T0D9"/>
<dbReference type="PhosphoSitePlus" id="Q5T0D9"/>
<dbReference type="SwissPalm" id="Q5T0D9"/>
<dbReference type="BioMuta" id="TPRG1L"/>
<dbReference type="DMDM" id="74744290"/>
<dbReference type="jPOST" id="Q5T0D9"/>
<dbReference type="MassIVE" id="Q5T0D9"/>
<dbReference type="PaxDb" id="9606-ENSP00000367595"/>
<dbReference type="PeptideAtlas" id="Q5T0D9"/>
<dbReference type="ProteomicsDB" id="64154">
    <molecule id="Q5T0D9-1"/>
</dbReference>
<dbReference type="ProteomicsDB" id="64155">
    <molecule id="Q5T0D9-2"/>
</dbReference>
<dbReference type="Pumba" id="Q5T0D9"/>
<dbReference type="Antibodypedia" id="26890">
    <property type="antibodies" value="60 antibodies from 16 providers"/>
</dbReference>
<dbReference type="DNASU" id="127262"/>
<dbReference type="Ensembl" id="ENST00000344579.5">
    <molecule id="Q5T0D9-2"/>
    <property type="protein sequence ID" value="ENSP00000339714.5"/>
    <property type="gene ID" value="ENSG00000158109.15"/>
</dbReference>
<dbReference type="Ensembl" id="ENST00000378344.7">
    <molecule id="Q5T0D9-1"/>
    <property type="protein sequence ID" value="ENSP00000367595.2"/>
    <property type="gene ID" value="ENSG00000158109.15"/>
</dbReference>
<dbReference type="GeneID" id="127262"/>
<dbReference type="KEGG" id="hsa:127262"/>
<dbReference type="MANE-Select" id="ENST00000378344.7">
    <property type="protein sequence ID" value="ENSP00000367595.2"/>
    <property type="RefSeq nucleotide sequence ID" value="NM_182752.4"/>
    <property type="RefSeq protein sequence ID" value="NP_877429.2"/>
</dbReference>
<dbReference type="UCSC" id="uc001akm.4">
    <molecule id="Q5T0D9-1"/>
    <property type="organism name" value="human"/>
</dbReference>
<dbReference type="AGR" id="HGNC:27007"/>
<dbReference type="CTD" id="127262"/>
<dbReference type="DisGeNET" id="127262"/>
<dbReference type="GeneCards" id="TPRG1L"/>
<dbReference type="HGNC" id="HGNC:27007">
    <property type="gene designation" value="TPRG1L"/>
</dbReference>
<dbReference type="HPA" id="ENSG00000158109">
    <property type="expression patterns" value="Low tissue specificity"/>
</dbReference>
<dbReference type="MIM" id="611460">
    <property type="type" value="gene"/>
</dbReference>
<dbReference type="neXtProt" id="NX_Q5T0D9"/>
<dbReference type="OpenTargets" id="ENSG00000158109"/>
<dbReference type="PharmGKB" id="PA162406855"/>
<dbReference type="VEuPathDB" id="HostDB:ENSG00000158109"/>
<dbReference type="eggNOG" id="ENOG502QTYQ">
    <property type="taxonomic scope" value="Eukaryota"/>
</dbReference>
<dbReference type="GeneTree" id="ENSGT00390000001652"/>
<dbReference type="HOGENOM" id="CLU_066718_1_0_1"/>
<dbReference type="InParanoid" id="Q5T0D9"/>
<dbReference type="OMA" id="WNPWSSN"/>
<dbReference type="OrthoDB" id="10012704at2759"/>
<dbReference type="PAN-GO" id="Q5T0D9">
    <property type="GO annotations" value="2 GO annotations based on evolutionary models"/>
</dbReference>
<dbReference type="PhylomeDB" id="Q5T0D9"/>
<dbReference type="TreeFam" id="TF333472"/>
<dbReference type="PathwayCommons" id="Q5T0D9"/>
<dbReference type="SignaLink" id="Q5T0D9"/>
<dbReference type="BioGRID-ORCS" id="127262">
    <property type="hits" value="15 hits in 1154 CRISPR screens"/>
</dbReference>
<dbReference type="ChiTaRS" id="TPRG1L">
    <property type="organism name" value="human"/>
</dbReference>
<dbReference type="GenomeRNAi" id="127262"/>
<dbReference type="Pharos" id="Q5T0D9">
    <property type="development level" value="Tbio"/>
</dbReference>
<dbReference type="PRO" id="PR:Q5T0D9"/>
<dbReference type="Proteomes" id="UP000005640">
    <property type="component" value="Chromosome 1"/>
</dbReference>
<dbReference type="RNAct" id="Q5T0D9">
    <property type="molecule type" value="protein"/>
</dbReference>
<dbReference type="Bgee" id="ENSG00000158109">
    <property type="expression patterns" value="Expressed in ileal mucosa and 176 other cell types or tissues"/>
</dbReference>
<dbReference type="GO" id="GO:0044305">
    <property type="term" value="C:calyx of Held"/>
    <property type="evidence" value="ECO:0000250"/>
    <property type="project" value="UniProtKB"/>
</dbReference>
<dbReference type="GO" id="GO:0005737">
    <property type="term" value="C:cytoplasm"/>
    <property type="evidence" value="ECO:0000318"/>
    <property type="project" value="GO_Central"/>
</dbReference>
<dbReference type="GO" id="GO:0070062">
    <property type="term" value="C:extracellular exosome"/>
    <property type="evidence" value="ECO:0007005"/>
    <property type="project" value="UniProtKB"/>
</dbReference>
<dbReference type="GO" id="GO:0048786">
    <property type="term" value="C:presynaptic active zone"/>
    <property type="evidence" value="ECO:0007669"/>
    <property type="project" value="UniProtKB-SubCell"/>
</dbReference>
<dbReference type="GO" id="GO:0008021">
    <property type="term" value="C:synaptic vesicle"/>
    <property type="evidence" value="ECO:0000250"/>
    <property type="project" value="UniProtKB"/>
</dbReference>
<dbReference type="GO" id="GO:0030672">
    <property type="term" value="C:synaptic vesicle membrane"/>
    <property type="evidence" value="ECO:0007669"/>
    <property type="project" value="UniProtKB-SubCell"/>
</dbReference>
<dbReference type="GO" id="GO:0005516">
    <property type="term" value="F:calmodulin binding"/>
    <property type="evidence" value="ECO:0007669"/>
    <property type="project" value="Ensembl"/>
</dbReference>
<dbReference type="GO" id="GO:0042802">
    <property type="term" value="F:identical protein binding"/>
    <property type="evidence" value="ECO:0007669"/>
    <property type="project" value="Ensembl"/>
</dbReference>
<dbReference type="GO" id="GO:0033173">
    <property type="term" value="P:calcineurin-NFAT signaling cascade"/>
    <property type="evidence" value="ECO:0007669"/>
    <property type="project" value="Ensembl"/>
</dbReference>
<dbReference type="GO" id="GO:0050805">
    <property type="term" value="P:negative regulation of synaptic transmission"/>
    <property type="evidence" value="ECO:0007669"/>
    <property type="project" value="Ensembl"/>
</dbReference>
<dbReference type="GO" id="GO:0051966">
    <property type="term" value="P:regulation of synaptic transmission, glutamatergic"/>
    <property type="evidence" value="ECO:0000250"/>
    <property type="project" value="UniProtKB"/>
</dbReference>
<dbReference type="GO" id="GO:0016081">
    <property type="term" value="P:synaptic vesicle docking"/>
    <property type="evidence" value="ECO:0007669"/>
    <property type="project" value="Ensembl"/>
</dbReference>
<dbReference type="InterPro" id="IPR034753">
    <property type="entry name" value="hSac2"/>
</dbReference>
<dbReference type="InterPro" id="IPR022158">
    <property type="entry name" value="Inositol_phosphatase"/>
</dbReference>
<dbReference type="InterPro" id="IPR040242">
    <property type="entry name" value="TPRG1-like"/>
</dbReference>
<dbReference type="PANTHER" id="PTHR31108">
    <property type="entry name" value="TUMOR PROTEIN P63-REGULATED GENE 1-LIKE PROTEIN"/>
    <property type="match status" value="1"/>
</dbReference>
<dbReference type="PANTHER" id="PTHR31108:SF7">
    <property type="entry name" value="TUMOR PROTEIN P63-REGULATED GENE 1-LIKE PROTEIN"/>
    <property type="match status" value="1"/>
</dbReference>
<dbReference type="Pfam" id="PF12456">
    <property type="entry name" value="hSac2"/>
    <property type="match status" value="1"/>
</dbReference>
<dbReference type="PROSITE" id="PS51791">
    <property type="entry name" value="HSAC2"/>
    <property type="match status" value="1"/>
</dbReference>
<reference key="1">
    <citation type="journal article" date="2004" name="Nat. Genet.">
        <title>Complete sequencing and characterization of 21,243 full-length human cDNAs.</title>
        <authorList>
            <person name="Ota T."/>
            <person name="Suzuki Y."/>
            <person name="Nishikawa T."/>
            <person name="Otsuki T."/>
            <person name="Sugiyama T."/>
            <person name="Irie R."/>
            <person name="Wakamatsu A."/>
            <person name="Hayashi K."/>
            <person name="Sato H."/>
            <person name="Nagai K."/>
            <person name="Kimura K."/>
            <person name="Makita H."/>
            <person name="Sekine M."/>
            <person name="Obayashi M."/>
            <person name="Nishi T."/>
            <person name="Shibahara T."/>
            <person name="Tanaka T."/>
            <person name="Ishii S."/>
            <person name="Yamamoto J."/>
            <person name="Saito K."/>
            <person name="Kawai Y."/>
            <person name="Isono Y."/>
            <person name="Nakamura Y."/>
            <person name="Nagahari K."/>
            <person name="Murakami K."/>
            <person name="Yasuda T."/>
            <person name="Iwayanagi T."/>
            <person name="Wagatsuma M."/>
            <person name="Shiratori A."/>
            <person name="Sudo H."/>
            <person name="Hosoiri T."/>
            <person name="Kaku Y."/>
            <person name="Kodaira H."/>
            <person name="Kondo H."/>
            <person name="Sugawara M."/>
            <person name="Takahashi M."/>
            <person name="Kanda K."/>
            <person name="Yokoi T."/>
            <person name="Furuya T."/>
            <person name="Kikkawa E."/>
            <person name="Omura Y."/>
            <person name="Abe K."/>
            <person name="Kamihara K."/>
            <person name="Katsuta N."/>
            <person name="Sato K."/>
            <person name="Tanikawa M."/>
            <person name="Yamazaki M."/>
            <person name="Ninomiya K."/>
            <person name="Ishibashi T."/>
            <person name="Yamashita H."/>
            <person name="Murakawa K."/>
            <person name="Fujimori K."/>
            <person name="Tanai H."/>
            <person name="Kimata M."/>
            <person name="Watanabe M."/>
            <person name="Hiraoka S."/>
            <person name="Chiba Y."/>
            <person name="Ishida S."/>
            <person name="Ono Y."/>
            <person name="Takiguchi S."/>
            <person name="Watanabe S."/>
            <person name="Yosida M."/>
            <person name="Hotuta T."/>
            <person name="Kusano J."/>
            <person name="Kanehori K."/>
            <person name="Takahashi-Fujii A."/>
            <person name="Hara H."/>
            <person name="Tanase T.-O."/>
            <person name="Nomura Y."/>
            <person name="Togiya S."/>
            <person name="Komai F."/>
            <person name="Hara R."/>
            <person name="Takeuchi K."/>
            <person name="Arita M."/>
            <person name="Imose N."/>
            <person name="Musashino K."/>
            <person name="Yuuki H."/>
            <person name="Oshima A."/>
            <person name="Sasaki N."/>
            <person name="Aotsuka S."/>
            <person name="Yoshikawa Y."/>
            <person name="Matsunawa H."/>
            <person name="Ichihara T."/>
            <person name="Shiohata N."/>
            <person name="Sano S."/>
            <person name="Moriya S."/>
            <person name="Momiyama H."/>
            <person name="Satoh N."/>
            <person name="Takami S."/>
            <person name="Terashima Y."/>
            <person name="Suzuki O."/>
            <person name="Nakagawa S."/>
            <person name="Senoh A."/>
            <person name="Mizoguchi H."/>
            <person name="Goto Y."/>
            <person name="Shimizu F."/>
            <person name="Wakebe H."/>
            <person name="Hishigaki H."/>
            <person name="Watanabe T."/>
            <person name="Sugiyama A."/>
            <person name="Takemoto M."/>
            <person name="Kawakami B."/>
            <person name="Yamazaki M."/>
            <person name="Watanabe K."/>
            <person name="Kumagai A."/>
            <person name="Itakura S."/>
            <person name="Fukuzumi Y."/>
            <person name="Fujimori Y."/>
            <person name="Komiyama M."/>
            <person name="Tashiro H."/>
            <person name="Tanigami A."/>
            <person name="Fujiwara T."/>
            <person name="Ono T."/>
            <person name="Yamada K."/>
            <person name="Fujii Y."/>
            <person name="Ozaki K."/>
            <person name="Hirao M."/>
            <person name="Ohmori Y."/>
            <person name="Kawabata A."/>
            <person name="Hikiji T."/>
            <person name="Kobatake N."/>
            <person name="Inagaki H."/>
            <person name="Ikema Y."/>
            <person name="Okamoto S."/>
            <person name="Okitani R."/>
            <person name="Kawakami T."/>
            <person name="Noguchi S."/>
            <person name="Itoh T."/>
            <person name="Shigeta K."/>
            <person name="Senba T."/>
            <person name="Matsumura K."/>
            <person name="Nakajima Y."/>
            <person name="Mizuno T."/>
            <person name="Morinaga M."/>
            <person name="Sasaki M."/>
            <person name="Togashi T."/>
            <person name="Oyama M."/>
            <person name="Hata H."/>
            <person name="Watanabe M."/>
            <person name="Komatsu T."/>
            <person name="Mizushima-Sugano J."/>
            <person name="Satoh T."/>
            <person name="Shirai Y."/>
            <person name="Takahashi Y."/>
            <person name="Nakagawa K."/>
            <person name="Okumura K."/>
            <person name="Nagase T."/>
            <person name="Nomura N."/>
            <person name="Kikuchi H."/>
            <person name="Masuho Y."/>
            <person name="Yamashita R."/>
            <person name="Nakai K."/>
            <person name="Yada T."/>
            <person name="Nakamura Y."/>
            <person name="Ohara O."/>
            <person name="Isogai T."/>
            <person name="Sugano S."/>
        </authorList>
    </citation>
    <scope>NUCLEOTIDE SEQUENCE [LARGE SCALE MRNA]</scope>
    <source>
        <tissue>Hippocampus</tissue>
    </source>
</reference>
<reference key="2">
    <citation type="journal article" date="2006" name="Nature">
        <title>The DNA sequence and biological annotation of human chromosome 1.</title>
        <authorList>
            <person name="Gregory S.G."/>
            <person name="Barlow K.F."/>
            <person name="McLay K.E."/>
            <person name="Kaul R."/>
            <person name="Swarbreck D."/>
            <person name="Dunham A."/>
            <person name="Scott C.E."/>
            <person name="Howe K.L."/>
            <person name="Woodfine K."/>
            <person name="Spencer C.C.A."/>
            <person name="Jones M.C."/>
            <person name="Gillson C."/>
            <person name="Searle S."/>
            <person name="Zhou Y."/>
            <person name="Kokocinski F."/>
            <person name="McDonald L."/>
            <person name="Evans R."/>
            <person name="Phillips K."/>
            <person name="Atkinson A."/>
            <person name="Cooper R."/>
            <person name="Jones C."/>
            <person name="Hall R.E."/>
            <person name="Andrews T.D."/>
            <person name="Lloyd C."/>
            <person name="Ainscough R."/>
            <person name="Almeida J.P."/>
            <person name="Ambrose K.D."/>
            <person name="Anderson F."/>
            <person name="Andrew R.W."/>
            <person name="Ashwell R.I.S."/>
            <person name="Aubin K."/>
            <person name="Babbage A.K."/>
            <person name="Bagguley C.L."/>
            <person name="Bailey J."/>
            <person name="Beasley H."/>
            <person name="Bethel G."/>
            <person name="Bird C.P."/>
            <person name="Bray-Allen S."/>
            <person name="Brown J.Y."/>
            <person name="Brown A.J."/>
            <person name="Buckley D."/>
            <person name="Burton J."/>
            <person name="Bye J."/>
            <person name="Carder C."/>
            <person name="Chapman J.C."/>
            <person name="Clark S.Y."/>
            <person name="Clarke G."/>
            <person name="Clee C."/>
            <person name="Cobley V."/>
            <person name="Collier R.E."/>
            <person name="Corby N."/>
            <person name="Coville G.J."/>
            <person name="Davies J."/>
            <person name="Deadman R."/>
            <person name="Dunn M."/>
            <person name="Earthrowl M."/>
            <person name="Ellington A.G."/>
            <person name="Errington H."/>
            <person name="Frankish A."/>
            <person name="Frankland J."/>
            <person name="French L."/>
            <person name="Garner P."/>
            <person name="Garnett J."/>
            <person name="Gay L."/>
            <person name="Ghori M.R.J."/>
            <person name="Gibson R."/>
            <person name="Gilby L.M."/>
            <person name="Gillett W."/>
            <person name="Glithero R.J."/>
            <person name="Grafham D.V."/>
            <person name="Griffiths C."/>
            <person name="Griffiths-Jones S."/>
            <person name="Grocock R."/>
            <person name="Hammond S."/>
            <person name="Harrison E.S.I."/>
            <person name="Hart E."/>
            <person name="Haugen E."/>
            <person name="Heath P.D."/>
            <person name="Holmes S."/>
            <person name="Holt K."/>
            <person name="Howden P.J."/>
            <person name="Hunt A.R."/>
            <person name="Hunt S.E."/>
            <person name="Hunter G."/>
            <person name="Isherwood J."/>
            <person name="James R."/>
            <person name="Johnson C."/>
            <person name="Johnson D."/>
            <person name="Joy A."/>
            <person name="Kay M."/>
            <person name="Kershaw J.K."/>
            <person name="Kibukawa M."/>
            <person name="Kimberley A.M."/>
            <person name="King A."/>
            <person name="Knights A.J."/>
            <person name="Lad H."/>
            <person name="Laird G."/>
            <person name="Lawlor S."/>
            <person name="Leongamornlert D.A."/>
            <person name="Lloyd D.M."/>
            <person name="Loveland J."/>
            <person name="Lovell J."/>
            <person name="Lush M.J."/>
            <person name="Lyne R."/>
            <person name="Martin S."/>
            <person name="Mashreghi-Mohammadi M."/>
            <person name="Matthews L."/>
            <person name="Matthews N.S.W."/>
            <person name="McLaren S."/>
            <person name="Milne S."/>
            <person name="Mistry S."/>
            <person name="Moore M.J.F."/>
            <person name="Nickerson T."/>
            <person name="O'Dell C.N."/>
            <person name="Oliver K."/>
            <person name="Palmeiri A."/>
            <person name="Palmer S.A."/>
            <person name="Parker A."/>
            <person name="Patel D."/>
            <person name="Pearce A.V."/>
            <person name="Peck A.I."/>
            <person name="Pelan S."/>
            <person name="Phelps K."/>
            <person name="Phillimore B.J."/>
            <person name="Plumb R."/>
            <person name="Rajan J."/>
            <person name="Raymond C."/>
            <person name="Rouse G."/>
            <person name="Saenphimmachak C."/>
            <person name="Sehra H.K."/>
            <person name="Sheridan E."/>
            <person name="Shownkeen R."/>
            <person name="Sims S."/>
            <person name="Skuce C.D."/>
            <person name="Smith M."/>
            <person name="Steward C."/>
            <person name="Subramanian S."/>
            <person name="Sycamore N."/>
            <person name="Tracey A."/>
            <person name="Tromans A."/>
            <person name="Van Helmond Z."/>
            <person name="Wall M."/>
            <person name="Wallis J.M."/>
            <person name="White S."/>
            <person name="Whitehead S.L."/>
            <person name="Wilkinson J.E."/>
            <person name="Willey D.L."/>
            <person name="Williams H."/>
            <person name="Wilming L."/>
            <person name="Wray P.W."/>
            <person name="Wu Z."/>
            <person name="Coulson A."/>
            <person name="Vaudin M."/>
            <person name="Sulston J.E."/>
            <person name="Durbin R.M."/>
            <person name="Hubbard T."/>
            <person name="Wooster R."/>
            <person name="Dunham I."/>
            <person name="Carter N.P."/>
            <person name="McVean G."/>
            <person name="Ross M.T."/>
            <person name="Harrow J."/>
            <person name="Olson M.V."/>
            <person name="Beck S."/>
            <person name="Rogers J."/>
            <person name="Bentley D.R."/>
        </authorList>
    </citation>
    <scope>NUCLEOTIDE SEQUENCE [LARGE SCALE GENOMIC DNA]</scope>
</reference>
<reference key="3">
    <citation type="journal article" date="2004" name="Genome Res.">
        <title>The status, quality, and expansion of the NIH full-length cDNA project: the Mammalian Gene Collection (MGC).</title>
        <authorList>
            <consortium name="The MGC Project Team"/>
        </authorList>
    </citation>
    <scope>NUCLEOTIDE SEQUENCE [LARGE SCALE MRNA] (ISOFORM 2)</scope>
    <source>
        <tissue>B-cell</tissue>
    </source>
</reference>
<reference key="4">
    <citation type="journal article" date="2008" name="Proc. Natl. Acad. Sci. U.S.A.">
        <title>A quantitative atlas of mitotic phosphorylation.</title>
        <authorList>
            <person name="Dephoure N."/>
            <person name="Zhou C."/>
            <person name="Villen J."/>
            <person name="Beausoleil S.A."/>
            <person name="Bakalarski C.E."/>
            <person name="Elledge S.J."/>
            <person name="Gygi S.P."/>
        </authorList>
    </citation>
    <scope>PHOSPHORYLATION [LARGE SCALE ANALYSIS] AT THR-40</scope>
    <scope>IDENTIFICATION BY MASS SPECTROMETRY [LARGE SCALE ANALYSIS]</scope>
    <source>
        <tissue>Cervix carcinoma</tissue>
    </source>
</reference>